<sequence length="336" mass="37687">MTTNRKDEHILYALEQKSSYNSFDEVELIHSSLPLYNLDEIDLSTEFAGRKWDFPFYINAMTGGSNKGREINQKLAQVAESCGILFVTGSYSAALKNPTDDSFSVKSSHPNLLLGTNIGLDKPVELGLQTVEEMNPVLLQVHVNVMQELLMPEGERKFRSWQSHLADYSKQIPVPIVLKEVGFGMDAKTIERAYEFGVRTVDLSGRGGTSFAYIENRRSGQRDYLNQWGQSTMQALLNAQEWKDKVELLVSGGVRNPLDMIKCLVFGAKAVGLSRTVLELVETYTVEEVIGIVQGWKADLRLIMCSLNCATIADLQKVDYLLYGKLKEAKDQMKKA</sequence>
<dbReference type="EC" id="5.3.3.2" evidence="1"/>
<dbReference type="EMBL" id="FM211187">
    <property type="protein sequence ID" value="CAR68211.1"/>
    <property type="molecule type" value="Genomic_DNA"/>
</dbReference>
<dbReference type="RefSeq" id="WP_000210618.1">
    <property type="nucleotide sequence ID" value="NC_011900.1"/>
</dbReference>
<dbReference type="SMR" id="B8ZLF5"/>
<dbReference type="KEGG" id="sne:SPN23F03560"/>
<dbReference type="HOGENOM" id="CLU_065515_0_0_9"/>
<dbReference type="GO" id="GO:0005737">
    <property type="term" value="C:cytoplasm"/>
    <property type="evidence" value="ECO:0007669"/>
    <property type="project" value="UniProtKB-SubCell"/>
</dbReference>
<dbReference type="GO" id="GO:0010181">
    <property type="term" value="F:FMN binding"/>
    <property type="evidence" value="ECO:0007669"/>
    <property type="project" value="UniProtKB-UniRule"/>
</dbReference>
<dbReference type="GO" id="GO:0004452">
    <property type="term" value="F:isopentenyl-diphosphate delta-isomerase activity"/>
    <property type="evidence" value="ECO:0007669"/>
    <property type="project" value="UniProtKB-UniRule"/>
</dbReference>
<dbReference type="GO" id="GO:0000287">
    <property type="term" value="F:magnesium ion binding"/>
    <property type="evidence" value="ECO:0007669"/>
    <property type="project" value="UniProtKB-UniRule"/>
</dbReference>
<dbReference type="GO" id="GO:0070402">
    <property type="term" value="F:NADPH binding"/>
    <property type="evidence" value="ECO:0007669"/>
    <property type="project" value="UniProtKB-UniRule"/>
</dbReference>
<dbReference type="GO" id="GO:0016491">
    <property type="term" value="F:oxidoreductase activity"/>
    <property type="evidence" value="ECO:0007669"/>
    <property type="project" value="InterPro"/>
</dbReference>
<dbReference type="GO" id="GO:0008299">
    <property type="term" value="P:isoprenoid biosynthetic process"/>
    <property type="evidence" value="ECO:0007669"/>
    <property type="project" value="UniProtKB-UniRule"/>
</dbReference>
<dbReference type="CDD" id="cd02811">
    <property type="entry name" value="IDI-2_FMN"/>
    <property type="match status" value="1"/>
</dbReference>
<dbReference type="Gene3D" id="3.20.20.70">
    <property type="entry name" value="Aldolase class I"/>
    <property type="match status" value="1"/>
</dbReference>
<dbReference type="HAMAP" id="MF_00354">
    <property type="entry name" value="Idi_2"/>
    <property type="match status" value="1"/>
</dbReference>
<dbReference type="InterPro" id="IPR013785">
    <property type="entry name" value="Aldolase_TIM"/>
</dbReference>
<dbReference type="InterPro" id="IPR000262">
    <property type="entry name" value="FMN-dep_DH"/>
</dbReference>
<dbReference type="InterPro" id="IPR011179">
    <property type="entry name" value="IPdP_isomerase"/>
</dbReference>
<dbReference type="NCBIfam" id="TIGR02151">
    <property type="entry name" value="IPP_isom_2"/>
    <property type="match status" value="1"/>
</dbReference>
<dbReference type="PANTHER" id="PTHR43665">
    <property type="entry name" value="ISOPENTENYL-DIPHOSPHATE DELTA-ISOMERASE"/>
    <property type="match status" value="1"/>
</dbReference>
<dbReference type="PANTHER" id="PTHR43665:SF1">
    <property type="entry name" value="ISOPENTENYL-DIPHOSPHATE DELTA-ISOMERASE"/>
    <property type="match status" value="1"/>
</dbReference>
<dbReference type="Pfam" id="PF01070">
    <property type="entry name" value="FMN_dh"/>
    <property type="match status" value="1"/>
</dbReference>
<dbReference type="PIRSF" id="PIRSF003314">
    <property type="entry name" value="IPP_isomerase"/>
    <property type="match status" value="1"/>
</dbReference>
<dbReference type="SUPFAM" id="SSF51395">
    <property type="entry name" value="FMN-linked oxidoreductases"/>
    <property type="match status" value="1"/>
</dbReference>
<feature type="chain" id="PRO_1000133434" description="Isopentenyl-diphosphate delta-isomerase">
    <location>
        <begin position="1"/>
        <end position="336"/>
    </location>
</feature>
<feature type="binding site" evidence="1">
    <location>
        <begin position="5"/>
        <end position="6"/>
    </location>
    <ligand>
        <name>substrate</name>
    </ligand>
</feature>
<feature type="binding site" evidence="1">
    <location>
        <begin position="60"/>
        <end position="62"/>
    </location>
    <ligand>
        <name>FMN</name>
        <dbReference type="ChEBI" id="CHEBI:58210"/>
    </ligand>
</feature>
<feature type="binding site" evidence="1">
    <location>
        <position position="90"/>
    </location>
    <ligand>
        <name>FMN</name>
        <dbReference type="ChEBI" id="CHEBI:58210"/>
    </ligand>
</feature>
<feature type="binding site" evidence="1">
    <location>
        <position position="117"/>
    </location>
    <ligand>
        <name>FMN</name>
        <dbReference type="ChEBI" id="CHEBI:58210"/>
    </ligand>
</feature>
<feature type="binding site" evidence="1">
    <location>
        <position position="147"/>
    </location>
    <ligand>
        <name>substrate</name>
    </ligand>
</feature>
<feature type="binding site" evidence="1">
    <location>
        <position position="148"/>
    </location>
    <ligand>
        <name>Mg(2+)</name>
        <dbReference type="ChEBI" id="CHEBI:18420"/>
    </ligand>
</feature>
<feature type="binding site" evidence="1">
    <location>
        <position position="179"/>
    </location>
    <ligand>
        <name>FMN</name>
        <dbReference type="ChEBI" id="CHEBI:58210"/>
    </ligand>
</feature>
<feature type="binding site" evidence="1">
    <location>
        <position position="204"/>
    </location>
    <ligand>
        <name>FMN</name>
        <dbReference type="ChEBI" id="CHEBI:58210"/>
    </ligand>
</feature>
<feature type="binding site" evidence="1">
    <location>
        <position position="209"/>
    </location>
    <ligand>
        <name>FMN</name>
        <dbReference type="ChEBI" id="CHEBI:58210"/>
    </ligand>
</feature>
<feature type="binding site" evidence="1">
    <location>
        <begin position="253"/>
        <end position="255"/>
    </location>
    <ligand>
        <name>FMN</name>
        <dbReference type="ChEBI" id="CHEBI:58210"/>
    </ligand>
</feature>
<feature type="binding site" evidence="1">
    <location>
        <begin position="274"/>
        <end position="275"/>
    </location>
    <ligand>
        <name>FMN</name>
        <dbReference type="ChEBI" id="CHEBI:58210"/>
    </ligand>
</feature>
<gene>
    <name evidence="1" type="primary">fni</name>
    <name type="ordered locus">SPN23F03560</name>
</gene>
<keyword id="KW-0963">Cytoplasm</keyword>
<keyword id="KW-0285">Flavoprotein</keyword>
<keyword id="KW-0288">FMN</keyword>
<keyword id="KW-0413">Isomerase</keyword>
<keyword id="KW-0414">Isoprene biosynthesis</keyword>
<keyword id="KW-0460">Magnesium</keyword>
<keyword id="KW-0479">Metal-binding</keyword>
<keyword id="KW-0521">NADP</keyword>
<proteinExistence type="inferred from homology"/>
<accession>B8ZLF5</accession>
<comment type="function">
    <text evidence="1">Involved in the biosynthesis of isoprenoids. Catalyzes the 1,3-allylic rearrangement of the homoallylic substrate isopentenyl (IPP) to its allylic isomer, dimethylallyl diphosphate (DMAPP).</text>
</comment>
<comment type="catalytic activity">
    <reaction evidence="1">
        <text>isopentenyl diphosphate = dimethylallyl diphosphate</text>
        <dbReference type="Rhea" id="RHEA:23284"/>
        <dbReference type="ChEBI" id="CHEBI:57623"/>
        <dbReference type="ChEBI" id="CHEBI:128769"/>
        <dbReference type="EC" id="5.3.3.2"/>
    </reaction>
</comment>
<comment type="cofactor">
    <cofactor evidence="1">
        <name>FMN</name>
        <dbReference type="ChEBI" id="CHEBI:58210"/>
    </cofactor>
</comment>
<comment type="cofactor">
    <cofactor evidence="1">
        <name>NADPH</name>
        <dbReference type="ChEBI" id="CHEBI:57783"/>
    </cofactor>
</comment>
<comment type="cofactor">
    <cofactor evidence="1">
        <name>Mg(2+)</name>
        <dbReference type="ChEBI" id="CHEBI:18420"/>
    </cofactor>
</comment>
<comment type="subunit">
    <text evidence="1">Homooctamer. Dimer of tetramers.</text>
</comment>
<comment type="subcellular location">
    <subcellularLocation>
        <location evidence="1">Cytoplasm</location>
    </subcellularLocation>
</comment>
<comment type="similarity">
    <text evidence="1">Belongs to the IPP isomerase type 2 family.</text>
</comment>
<reference key="1">
    <citation type="journal article" date="2009" name="J. Bacteriol.">
        <title>Role of conjugative elements in the evolution of the multidrug-resistant pandemic clone Streptococcus pneumoniae Spain23F ST81.</title>
        <authorList>
            <person name="Croucher N.J."/>
            <person name="Walker D."/>
            <person name="Romero P."/>
            <person name="Lennard N."/>
            <person name="Paterson G.K."/>
            <person name="Bason N.C."/>
            <person name="Mitchell A.M."/>
            <person name="Quail M.A."/>
            <person name="Andrew P.W."/>
            <person name="Parkhill J."/>
            <person name="Bentley S.D."/>
            <person name="Mitchell T.J."/>
        </authorList>
    </citation>
    <scope>NUCLEOTIDE SEQUENCE [LARGE SCALE GENOMIC DNA]</scope>
    <source>
        <strain>ATCC 700669 / Spain 23F-1</strain>
    </source>
</reference>
<organism>
    <name type="scientific">Streptococcus pneumoniae (strain ATCC 700669 / Spain 23F-1)</name>
    <dbReference type="NCBI Taxonomy" id="561276"/>
    <lineage>
        <taxon>Bacteria</taxon>
        <taxon>Bacillati</taxon>
        <taxon>Bacillota</taxon>
        <taxon>Bacilli</taxon>
        <taxon>Lactobacillales</taxon>
        <taxon>Streptococcaceae</taxon>
        <taxon>Streptococcus</taxon>
    </lineage>
</organism>
<name>IDI2_STRPJ</name>
<protein>
    <recommendedName>
        <fullName evidence="1">Isopentenyl-diphosphate delta-isomerase</fullName>
        <shortName evidence="1">IPP isomerase</shortName>
        <ecNumber evidence="1">5.3.3.2</ecNumber>
    </recommendedName>
    <alternativeName>
        <fullName evidence="1">Isopentenyl diphosphate:dimethylallyl diphosphate isomerase</fullName>
    </alternativeName>
    <alternativeName>
        <fullName evidence="1">Isopentenyl pyrophosphate isomerase</fullName>
    </alternativeName>
    <alternativeName>
        <fullName evidence="1">Type 2 isopentenyl diphosphate isomerase</fullName>
        <shortName evidence="1">IDI-2</shortName>
    </alternativeName>
</protein>
<evidence type="ECO:0000255" key="1">
    <source>
        <dbReference type="HAMAP-Rule" id="MF_00354"/>
    </source>
</evidence>